<gene>
    <name type="ORF">16.t00038</name>
</gene>
<feature type="chain" id="PRO_0000051617" description="Poly(A) polymerase">
    <location>
        <begin position="1"/>
        <end position="522"/>
    </location>
</feature>
<feature type="region of interest" description="Disordered" evidence="2">
    <location>
        <begin position="475"/>
        <end position="522"/>
    </location>
</feature>
<feature type="compositionally biased region" description="Basic and acidic residues" evidence="2">
    <location>
        <begin position="476"/>
        <end position="499"/>
    </location>
</feature>
<feature type="binding site" evidence="1">
    <location>
        <begin position="63"/>
        <end position="65"/>
    </location>
    <ligand>
        <name>ATP</name>
        <dbReference type="ChEBI" id="CHEBI:30616"/>
    </ligand>
</feature>
<feature type="binding site" evidence="1">
    <location>
        <begin position="76"/>
        <end position="78"/>
    </location>
    <ligand>
        <name>ATP</name>
        <dbReference type="ChEBI" id="CHEBI:30616"/>
    </ligand>
</feature>
<feature type="binding site" evidence="1">
    <location>
        <position position="76"/>
    </location>
    <ligand>
        <name>Mg(2+)</name>
        <dbReference type="ChEBI" id="CHEBI:18420"/>
        <label>1</label>
        <note>catalytic</note>
    </ligand>
</feature>
<feature type="binding site" evidence="1">
    <location>
        <position position="76"/>
    </location>
    <ligand>
        <name>Mg(2+)</name>
        <dbReference type="ChEBI" id="CHEBI:18420"/>
        <label>2</label>
        <note>catalytic</note>
    </ligand>
</feature>
<feature type="binding site" evidence="1">
    <location>
        <position position="78"/>
    </location>
    <ligand>
        <name>Mg(2+)</name>
        <dbReference type="ChEBI" id="CHEBI:18420"/>
        <label>1</label>
        <note>catalytic</note>
    </ligand>
</feature>
<feature type="binding site" evidence="1">
    <location>
        <position position="78"/>
    </location>
    <ligand>
        <name>Mg(2+)</name>
        <dbReference type="ChEBI" id="CHEBI:18420"/>
        <label>2</label>
        <note>catalytic</note>
    </ligand>
</feature>
<feature type="binding site" evidence="1">
    <location>
        <position position="130"/>
    </location>
    <ligand>
        <name>ATP</name>
        <dbReference type="ChEBI" id="CHEBI:30616"/>
    </ligand>
</feature>
<feature type="binding site" evidence="1">
    <location>
        <position position="130"/>
    </location>
    <ligand>
        <name>Mg(2+)</name>
        <dbReference type="ChEBI" id="CHEBI:18420"/>
        <label>2</label>
        <note>catalytic</note>
    </ligand>
</feature>
<feature type="binding site" evidence="1">
    <location>
        <position position="193"/>
    </location>
    <ligand>
        <name>ATP</name>
        <dbReference type="ChEBI" id="CHEBI:30616"/>
    </ligand>
</feature>
<feature type="binding site" evidence="1">
    <location>
        <position position="202"/>
    </location>
    <ligand>
        <name>ATP</name>
        <dbReference type="ChEBI" id="CHEBI:30616"/>
    </ligand>
</feature>
<feature type="binding site" evidence="1">
    <location>
        <begin position="211"/>
        <end position="212"/>
    </location>
    <ligand>
        <name>ATP</name>
        <dbReference type="ChEBI" id="CHEBI:30616"/>
    </ligand>
</feature>
<keyword id="KW-0067">ATP-binding</keyword>
<keyword id="KW-0963">Cytoplasm</keyword>
<keyword id="KW-0460">Magnesium</keyword>
<keyword id="KW-0464">Manganese</keyword>
<keyword id="KW-0479">Metal-binding</keyword>
<keyword id="KW-0507">mRNA processing</keyword>
<keyword id="KW-0547">Nucleotide-binding</keyword>
<keyword id="KW-0539">Nucleus</keyword>
<keyword id="KW-1185">Reference proteome</keyword>
<keyword id="KW-0694">RNA-binding</keyword>
<keyword id="KW-0808">Transferase</keyword>
<reference key="1">
    <citation type="journal article" date="2005" name="Exp. Parasitol.">
        <title>Entamoeba histolytica: cloning and expression of the poly(A) polymerase EhPAP.</title>
        <authorList>
            <person name="Garcia-Vivas J."/>
            <person name="Lopez-Camarillo C."/>
            <person name="Azuara-Liceaga E."/>
            <person name="Orozco E."/>
            <person name="Marchat L.A."/>
        </authorList>
    </citation>
    <scope>NUCLEOTIDE SEQUENCE [MRNA]</scope>
    <scope>FUNCTION</scope>
    <scope>DEVELOPMENTAL STAGE</scope>
    <scope>SUBCELLULAR LOCATION</scope>
</reference>
<reference key="2">
    <citation type="journal article" date="2005" name="Nature">
        <title>The genome of the protist parasite Entamoeba histolytica.</title>
        <authorList>
            <person name="Loftus B.J."/>
            <person name="Anderson I."/>
            <person name="Davies R."/>
            <person name="Alsmark U.C."/>
            <person name="Samuelson J."/>
            <person name="Amedeo P."/>
            <person name="Roncaglia P."/>
            <person name="Berriman M."/>
            <person name="Hirt R.P."/>
            <person name="Mann B.J."/>
            <person name="Nozaki T."/>
            <person name="Suh B."/>
            <person name="Pop M."/>
            <person name="Duchene M."/>
            <person name="Ackers J."/>
            <person name="Tannich E."/>
            <person name="Leippe M."/>
            <person name="Hofer M."/>
            <person name="Bruchhaus I."/>
            <person name="Willhoeft U."/>
            <person name="Bhattacharya A."/>
            <person name="Chillingworth T."/>
            <person name="Churcher C.M."/>
            <person name="Hance Z."/>
            <person name="Harris B."/>
            <person name="Harris D."/>
            <person name="Jagels K."/>
            <person name="Moule S."/>
            <person name="Mungall K.L."/>
            <person name="Ormond D."/>
            <person name="Squares R."/>
            <person name="Whitehead S."/>
            <person name="Quail M.A."/>
            <person name="Rabbinowitsch E."/>
            <person name="Norbertczak H."/>
            <person name="Price C."/>
            <person name="Wang Z."/>
            <person name="Guillen N."/>
            <person name="Gilchrist C."/>
            <person name="Stroup S.E."/>
            <person name="Bhattacharya S."/>
            <person name="Lohia A."/>
            <person name="Foster P.G."/>
            <person name="Sicheritz-Ponten T."/>
            <person name="Weber C."/>
            <person name="Singh U."/>
            <person name="Mukherjee C."/>
            <person name="El-Sayed N.M.A."/>
            <person name="Petri W.A."/>
            <person name="Clark C.G."/>
            <person name="Embley T.M."/>
            <person name="Barrell B.G."/>
            <person name="Fraser C.M."/>
            <person name="Hall N."/>
        </authorList>
    </citation>
    <scope>NUCLEOTIDE SEQUENCE [LARGE SCALE GENOMIC DNA]</scope>
    <source>
        <strain>ATCC 30459 / HM-1:IMSS / ABRM</strain>
    </source>
</reference>
<reference key="3">
    <citation type="journal article" date="2010" name="PLoS Negl. Trop. Dis.">
        <title>New assembly, reannotation and analysis of the Entamoeba histolytica genome reveal new genomic features and protein content information.</title>
        <authorList>
            <person name="Lorenzi H.A."/>
            <person name="Puiu D."/>
            <person name="Miller J.R."/>
            <person name="Brinkac L.M."/>
            <person name="Amedeo P."/>
            <person name="Hall N."/>
            <person name="Caler E.V."/>
        </authorList>
    </citation>
    <scope>GENOME REANNOTATION</scope>
    <source>
        <strain>ATCC 30459 / HM-1:IMSS / ABRM</strain>
    </source>
</reference>
<organism>
    <name type="scientific">Entamoeba histolytica (strain ATCC 30459 / HM-1:IMSS / ABRM)</name>
    <dbReference type="NCBI Taxonomy" id="294381"/>
    <lineage>
        <taxon>Eukaryota</taxon>
        <taxon>Amoebozoa</taxon>
        <taxon>Evosea</taxon>
        <taxon>Archamoebae</taxon>
        <taxon>Mastigamoebida</taxon>
        <taxon>Entamoebidae</taxon>
        <taxon>Entamoeba</taxon>
    </lineage>
</organism>
<proteinExistence type="evidence at transcript level"/>
<accession>Q51D88</accession>
<sequence>MACELKEFLVKNDMYPMGDQVEKKRKAISKMTEYIQQWGKKIYIESAGVADDTDVKAATIYVYGSYRLNVYGNNSDIDACIVSNSTITRDDFYDGLYAELLNNPDVKELKQIPSKRSPHLSMIYLNIEFDLNFSRTAYTSLPDNLDILNENILKNMDELDTRAINGVRNTDIIDAFVPNHSEEAFRVMVRTIKLWTKKRGIYGYVYCFLNGISIEILVAQVISENYQLDNVRLLEKFFQVYSSWDWLRTPVMLGTNDDFNDKKKEGVIQILTPASPSENAAFSITKFSLEMIKRELKRGQEIVHEFSSEGVNDWAKLFKPRHLFCGYYIFIEFIVTSSSLEGLTTTIGKFESGLVNLMKGLSEIEEIIEANVIPNGFLDEENEKYFYYVGMNVKRDCPVDISTPLNSFLSIVNSGKDLIVDASIKKRSEIPTKFAHSVKRSITKSQEIKETSSQVPSSAITETFDIPTKPSIEQQLKAKEENSIPNEEKKEQLKKEMKQEANTIVKNSSTDDDFMKRFTRKN</sequence>
<evidence type="ECO:0000250" key="1"/>
<evidence type="ECO:0000256" key="2">
    <source>
        <dbReference type="SAM" id="MobiDB-lite"/>
    </source>
</evidence>
<evidence type="ECO:0000269" key="3">
    <source>
    </source>
</evidence>
<evidence type="ECO:0000305" key="4"/>
<comment type="function">
    <text evidence="3">Polymerase that creates the 3'-poly(A) tail of mRNA's. May acquire specificity through interaction with a cleavage and polyadenylation factor.</text>
</comment>
<comment type="catalytic activity">
    <reaction>
        <text>RNA(n) + ATP = RNA(n)-3'-adenine ribonucleotide + diphosphate</text>
        <dbReference type="Rhea" id="RHEA:11332"/>
        <dbReference type="Rhea" id="RHEA-COMP:14527"/>
        <dbReference type="Rhea" id="RHEA-COMP:17347"/>
        <dbReference type="ChEBI" id="CHEBI:30616"/>
        <dbReference type="ChEBI" id="CHEBI:33019"/>
        <dbReference type="ChEBI" id="CHEBI:140395"/>
        <dbReference type="ChEBI" id="CHEBI:173115"/>
        <dbReference type="EC" id="2.7.7.19"/>
    </reaction>
</comment>
<comment type="cofactor">
    <cofactor evidence="1">
        <name>Mg(2+)</name>
        <dbReference type="ChEBI" id="CHEBI:18420"/>
    </cofactor>
    <cofactor evidence="1">
        <name>Mn(2+)</name>
        <dbReference type="ChEBI" id="CHEBI:29035"/>
    </cofactor>
    <text evidence="1">Binds 2 magnesium ions. Also active with manganese.</text>
</comment>
<comment type="subcellular location">
    <subcellularLocation>
        <location evidence="3">Cytoplasm</location>
    </subcellularLocation>
    <subcellularLocation>
        <location evidence="3">Nucleus</location>
    </subcellularLocation>
</comment>
<comment type="developmental stage">
    <text evidence="3">Mainly expressed during G1 and S phases.</text>
</comment>
<comment type="similarity">
    <text evidence="4">Belongs to the poly(A) polymerase family.</text>
</comment>
<dbReference type="EC" id="2.7.7.19"/>
<dbReference type="EMBL" id="DS571148">
    <property type="protein sequence ID" value="EAL50821.1"/>
    <property type="molecule type" value="Genomic_DNA"/>
</dbReference>
<dbReference type="RefSeq" id="XP_656205.1">
    <property type="nucleotide sequence ID" value="XM_651113.1"/>
</dbReference>
<dbReference type="SMR" id="Q51D88"/>
<dbReference type="FunCoup" id="Q51D88">
    <property type="interactions" value="647"/>
</dbReference>
<dbReference type="STRING" id="5759.Q51D88"/>
<dbReference type="GeneID" id="3410521"/>
<dbReference type="KEGG" id="ehi:EHI_012040"/>
<dbReference type="VEuPathDB" id="AmoebaDB:EHI5A_207940"/>
<dbReference type="VEuPathDB" id="AmoebaDB:EHI7A_168270"/>
<dbReference type="VEuPathDB" id="AmoebaDB:EHI8A_191470"/>
<dbReference type="VEuPathDB" id="AmoebaDB:EHI_012040"/>
<dbReference type="VEuPathDB" id="AmoebaDB:KM1_264350"/>
<dbReference type="eggNOG" id="KOG2245">
    <property type="taxonomic scope" value="Eukaryota"/>
</dbReference>
<dbReference type="InParanoid" id="Q51D88"/>
<dbReference type="OMA" id="EWKWPQP"/>
<dbReference type="OrthoDB" id="412748at2759"/>
<dbReference type="Proteomes" id="UP000001926">
    <property type="component" value="Partially assembled WGS sequence"/>
</dbReference>
<dbReference type="GO" id="GO:0005737">
    <property type="term" value="C:cytoplasm"/>
    <property type="evidence" value="ECO:0007669"/>
    <property type="project" value="UniProtKB-SubCell"/>
</dbReference>
<dbReference type="GO" id="GO:0005634">
    <property type="term" value="C:nucleus"/>
    <property type="evidence" value="ECO:0000318"/>
    <property type="project" value="GO_Central"/>
</dbReference>
<dbReference type="GO" id="GO:0005524">
    <property type="term" value="F:ATP binding"/>
    <property type="evidence" value="ECO:0007669"/>
    <property type="project" value="UniProtKB-KW"/>
</dbReference>
<dbReference type="GO" id="GO:0046872">
    <property type="term" value="F:metal ion binding"/>
    <property type="evidence" value="ECO:0007669"/>
    <property type="project" value="UniProtKB-KW"/>
</dbReference>
<dbReference type="GO" id="GO:1990817">
    <property type="term" value="F:poly(A) RNA polymerase activity"/>
    <property type="evidence" value="ECO:0000318"/>
    <property type="project" value="GO_Central"/>
</dbReference>
<dbReference type="GO" id="GO:0003723">
    <property type="term" value="F:RNA binding"/>
    <property type="evidence" value="ECO:0007669"/>
    <property type="project" value="UniProtKB-KW"/>
</dbReference>
<dbReference type="GO" id="GO:0006397">
    <property type="term" value="P:mRNA processing"/>
    <property type="evidence" value="ECO:0007669"/>
    <property type="project" value="UniProtKB-KW"/>
</dbReference>
<dbReference type="GO" id="GO:0031123">
    <property type="term" value="P:RNA 3'-end processing"/>
    <property type="evidence" value="ECO:0007669"/>
    <property type="project" value="InterPro"/>
</dbReference>
<dbReference type="CDD" id="cd05402">
    <property type="entry name" value="NT_PAP_TUTase"/>
    <property type="match status" value="1"/>
</dbReference>
<dbReference type="Gene3D" id="1.10.1410.10">
    <property type="match status" value="1"/>
</dbReference>
<dbReference type="Gene3D" id="3.30.460.10">
    <property type="entry name" value="Beta Polymerase, domain 2"/>
    <property type="match status" value="1"/>
</dbReference>
<dbReference type="InterPro" id="IPR043519">
    <property type="entry name" value="NT_sf"/>
</dbReference>
<dbReference type="InterPro" id="IPR011068">
    <property type="entry name" value="NuclTrfase_I-like_C"/>
</dbReference>
<dbReference type="InterPro" id="IPR007012">
    <property type="entry name" value="PolA_pol_cen_dom"/>
</dbReference>
<dbReference type="InterPro" id="IPR048840">
    <property type="entry name" value="PolA_pol_NTPase"/>
</dbReference>
<dbReference type="PANTHER" id="PTHR10682">
    <property type="entry name" value="POLY A POLYMERASE"/>
    <property type="match status" value="1"/>
</dbReference>
<dbReference type="PANTHER" id="PTHR10682:SF10">
    <property type="entry name" value="POLYNUCLEOTIDE ADENYLYLTRANSFERASE"/>
    <property type="match status" value="1"/>
</dbReference>
<dbReference type="Pfam" id="PF04928">
    <property type="entry name" value="PAP_central"/>
    <property type="match status" value="1"/>
</dbReference>
<dbReference type="Pfam" id="PF20750">
    <property type="entry name" value="PAP_NTPase"/>
    <property type="match status" value="1"/>
</dbReference>
<dbReference type="SUPFAM" id="SSF81301">
    <property type="entry name" value="Nucleotidyltransferase"/>
    <property type="match status" value="1"/>
</dbReference>
<dbReference type="SUPFAM" id="SSF55003">
    <property type="entry name" value="PAP/Archaeal CCA-adding enzyme, C-terminal domain"/>
    <property type="match status" value="1"/>
</dbReference>
<dbReference type="SUPFAM" id="SSF81631">
    <property type="entry name" value="PAP/OAS1 substrate-binding domain"/>
    <property type="match status" value="1"/>
</dbReference>
<name>PAP_ENTH1</name>
<protein>
    <recommendedName>
        <fullName>Poly(A) polymerase</fullName>
        <shortName>PAP</shortName>
        <ecNumber>2.7.7.19</ecNumber>
    </recommendedName>
    <alternativeName>
        <fullName>EhPAP</fullName>
    </alternativeName>
    <alternativeName>
        <fullName>Polynucleotide adenylyltransferase</fullName>
    </alternativeName>
</protein>